<organism>
    <name type="scientific">Xanthomonas campestris pv. campestris (strain ATCC 33913 / DSM 3586 / NCPPB 528 / LMG 568 / P 25)</name>
    <dbReference type="NCBI Taxonomy" id="190485"/>
    <lineage>
        <taxon>Bacteria</taxon>
        <taxon>Pseudomonadati</taxon>
        <taxon>Pseudomonadota</taxon>
        <taxon>Gammaproteobacteria</taxon>
        <taxon>Lysobacterales</taxon>
        <taxon>Lysobacteraceae</taxon>
        <taxon>Xanthomonas</taxon>
    </lineage>
</organism>
<comment type="catalytic activity">
    <reaction>
        <text>tRNA(His) + L-histidine + ATP = L-histidyl-tRNA(His) + AMP + diphosphate + H(+)</text>
        <dbReference type="Rhea" id="RHEA:17313"/>
        <dbReference type="Rhea" id="RHEA-COMP:9665"/>
        <dbReference type="Rhea" id="RHEA-COMP:9689"/>
        <dbReference type="ChEBI" id="CHEBI:15378"/>
        <dbReference type="ChEBI" id="CHEBI:30616"/>
        <dbReference type="ChEBI" id="CHEBI:33019"/>
        <dbReference type="ChEBI" id="CHEBI:57595"/>
        <dbReference type="ChEBI" id="CHEBI:78442"/>
        <dbReference type="ChEBI" id="CHEBI:78527"/>
        <dbReference type="ChEBI" id="CHEBI:456215"/>
        <dbReference type="EC" id="6.1.1.21"/>
    </reaction>
</comment>
<comment type="subunit">
    <text evidence="1">Homodimer.</text>
</comment>
<comment type="subcellular location">
    <subcellularLocation>
        <location evidence="1">Cytoplasm</location>
    </subcellularLocation>
</comment>
<comment type="similarity">
    <text evidence="2">Belongs to the class-II aminoacyl-tRNA synthetase family.</text>
</comment>
<protein>
    <recommendedName>
        <fullName>Histidine--tRNA ligase</fullName>
        <ecNumber>6.1.1.21</ecNumber>
    </recommendedName>
    <alternativeName>
        <fullName>Histidyl-tRNA synthetase</fullName>
        <shortName>HisRS</shortName>
    </alternativeName>
</protein>
<evidence type="ECO:0000250" key="1"/>
<evidence type="ECO:0000305" key="2"/>
<name>SYH_XANCP</name>
<feature type="chain" id="PRO_0000136300" description="Histidine--tRNA ligase">
    <location>
        <begin position="1"/>
        <end position="477"/>
    </location>
</feature>
<reference key="1">
    <citation type="journal article" date="2002" name="Nature">
        <title>Comparison of the genomes of two Xanthomonas pathogens with differing host specificities.</title>
        <authorList>
            <person name="da Silva A.C.R."/>
            <person name="Ferro J.A."/>
            <person name="Reinach F.C."/>
            <person name="Farah C.S."/>
            <person name="Furlan L.R."/>
            <person name="Quaggio R.B."/>
            <person name="Monteiro-Vitorello C.B."/>
            <person name="Van Sluys M.A."/>
            <person name="Almeida N.F. Jr."/>
            <person name="Alves L.M.C."/>
            <person name="do Amaral A.M."/>
            <person name="Bertolini M.C."/>
            <person name="Camargo L.E.A."/>
            <person name="Camarotte G."/>
            <person name="Cannavan F."/>
            <person name="Cardozo J."/>
            <person name="Chambergo F."/>
            <person name="Ciapina L.P."/>
            <person name="Cicarelli R.M.B."/>
            <person name="Coutinho L.L."/>
            <person name="Cursino-Santos J.R."/>
            <person name="El-Dorry H."/>
            <person name="Faria J.B."/>
            <person name="Ferreira A.J.S."/>
            <person name="Ferreira R.C.C."/>
            <person name="Ferro M.I.T."/>
            <person name="Formighieri E.F."/>
            <person name="Franco M.C."/>
            <person name="Greggio C.C."/>
            <person name="Gruber A."/>
            <person name="Katsuyama A.M."/>
            <person name="Kishi L.T."/>
            <person name="Leite R.P."/>
            <person name="Lemos E.G.M."/>
            <person name="Lemos M.V.F."/>
            <person name="Locali E.C."/>
            <person name="Machado M.A."/>
            <person name="Madeira A.M.B.N."/>
            <person name="Martinez-Rossi N.M."/>
            <person name="Martins E.C."/>
            <person name="Meidanis J."/>
            <person name="Menck C.F.M."/>
            <person name="Miyaki C.Y."/>
            <person name="Moon D.H."/>
            <person name="Moreira L.M."/>
            <person name="Novo M.T.M."/>
            <person name="Okura V.K."/>
            <person name="Oliveira M.C."/>
            <person name="Oliveira V.R."/>
            <person name="Pereira H.A."/>
            <person name="Rossi A."/>
            <person name="Sena J.A.D."/>
            <person name="Silva C."/>
            <person name="de Souza R.F."/>
            <person name="Spinola L.A.F."/>
            <person name="Takita M.A."/>
            <person name="Tamura R.E."/>
            <person name="Teixeira E.C."/>
            <person name="Tezza R.I.D."/>
            <person name="Trindade dos Santos M."/>
            <person name="Truffi D."/>
            <person name="Tsai S.M."/>
            <person name="White F.F."/>
            <person name="Setubal J.C."/>
            <person name="Kitajima J.P."/>
        </authorList>
    </citation>
    <scope>NUCLEOTIDE SEQUENCE [LARGE SCALE GENOMIC DNA]</scope>
    <source>
        <strain>ATCC 33913 / DSM 3586 / NCPPB 528 / LMG 568 / P 25</strain>
    </source>
</reference>
<proteinExistence type="inferred from homology"/>
<sequence>MIKPRTPPGIMELLPREQIAFQRMLDVIRRNYERFGFLPVETPVFELSDVLLTKSGGETERQVYFVQSTGALANAAAAADEGAESGGLPELALRFDLTVPLARYVAEHEHELSFPFRRYQMQRVYRGERAQRGRFREFYQCDIDVIGKDALSIRYDAEVLAVIHAVFAELGIGDFKVQLNNRKLLRGFFESLGVAEGELQLAVLREVDKIDKRGAEYVRDTLAGEGFGIAAAQVDKILAFVAVRSNGHADALAQLQALETSVGASVTLGEGIAELREVLELVKALGVPETAYCLNFSIARGLDYYTGTVYETTLTDHPQIGSICSGGRYENLASHYTKSKLPGVGISIGLTRLFWQLREAGLIAGIAESSVHAMVALMDESRLDDALDIARRLRIGGINTEVQMEPKKVGKQFQYAARAGIRFVVLAGDDELARGVVAVKDLVREQQFDVARDELASTLQVELEQAKAMLVSGIAAN</sequence>
<dbReference type="EC" id="6.1.1.21"/>
<dbReference type="EMBL" id="AE008922">
    <property type="protein sequence ID" value="AAM41095.1"/>
    <property type="molecule type" value="Genomic_DNA"/>
</dbReference>
<dbReference type="RefSeq" id="NP_637171.1">
    <property type="nucleotide sequence ID" value="NC_003902.1"/>
</dbReference>
<dbReference type="RefSeq" id="WP_011036976.1">
    <property type="nucleotide sequence ID" value="NC_003902.1"/>
</dbReference>
<dbReference type="SMR" id="Q8P9P5"/>
<dbReference type="STRING" id="190485.XCC1806"/>
<dbReference type="EnsemblBacteria" id="AAM41095">
    <property type="protein sequence ID" value="AAM41095"/>
    <property type="gene ID" value="XCC1806"/>
</dbReference>
<dbReference type="KEGG" id="xcc:XCC1806"/>
<dbReference type="PATRIC" id="fig|190485.4.peg.1926"/>
<dbReference type="eggNOG" id="COG0124">
    <property type="taxonomic scope" value="Bacteria"/>
</dbReference>
<dbReference type="HOGENOM" id="CLU_025113_3_0_6"/>
<dbReference type="OrthoDB" id="9800814at2"/>
<dbReference type="Proteomes" id="UP000001010">
    <property type="component" value="Chromosome"/>
</dbReference>
<dbReference type="GO" id="GO:0005737">
    <property type="term" value="C:cytoplasm"/>
    <property type="evidence" value="ECO:0007669"/>
    <property type="project" value="UniProtKB-SubCell"/>
</dbReference>
<dbReference type="GO" id="GO:0005524">
    <property type="term" value="F:ATP binding"/>
    <property type="evidence" value="ECO:0007669"/>
    <property type="project" value="UniProtKB-UniRule"/>
</dbReference>
<dbReference type="GO" id="GO:0004821">
    <property type="term" value="F:histidine-tRNA ligase activity"/>
    <property type="evidence" value="ECO:0007669"/>
    <property type="project" value="UniProtKB-UniRule"/>
</dbReference>
<dbReference type="GO" id="GO:0006427">
    <property type="term" value="P:histidyl-tRNA aminoacylation"/>
    <property type="evidence" value="ECO:0007669"/>
    <property type="project" value="UniProtKB-UniRule"/>
</dbReference>
<dbReference type="CDD" id="cd00773">
    <property type="entry name" value="HisRS-like_core"/>
    <property type="match status" value="1"/>
</dbReference>
<dbReference type="CDD" id="cd00859">
    <property type="entry name" value="HisRS_anticodon"/>
    <property type="match status" value="1"/>
</dbReference>
<dbReference type="FunFam" id="3.30.930.10:FF:000129">
    <property type="entry name" value="Histidine--tRNA ligase"/>
    <property type="match status" value="1"/>
</dbReference>
<dbReference type="FunFam" id="3.40.50.800:FF:000027">
    <property type="entry name" value="Histidine--tRNA ligase"/>
    <property type="match status" value="1"/>
</dbReference>
<dbReference type="Gene3D" id="3.40.50.800">
    <property type="entry name" value="Anticodon-binding domain"/>
    <property type="match status" value="1"/>
</dbReference>
<dbReference type="Gene3D" id="3.30.930.10">
    <property type="entry name" value="Bira Bifunctional Protein, Domain 2"/>
    <property type="match status" value="1"/>
</dbReference>
<dbReference type="HAMAP" id="MF_00127">
    <property type="entry name" value="His_tRNA_synth"/>
    <property type="match status" value="1"/>
</dbReference>
<dbReference type="InterPro" id="IPR006195">
    <property type="entry name" value="aa-tRNA-synth_II"/>
</dbReference>
<dbReference type="InterPro" id="IPR045864">
    <property type="entry name" value="aa-tRNA-synth_II/BPL/LPL"/>
</dbReference>
<dbReference type="InterPro" id="IPR004154">
    <property type="entry name" value="Anticodon-bd"/>
</dbReference>
<dbReference type="InterPro" id="IPR036621">
    <property type="entry name" value="Anticodon-bd_dom_sf"/>
</dbReference>
<dbReference type="InterPro" id="IPR015807">
    <property type="entry name" value="His-tRNA-ligase"/>
</dbReference>
<dbReference type="InterPro" id="IPR041715">
    <property type="entry name" value="HisRS-like_core"/>
</dbReference>
<dbReference type="InterPro" id="IPR004516">
    <property type="entry name" value="HisRS/HisZ"/>
</dbReference>
<dbReference type="InterPro" id="IPR033656">
    <property type="entry name" value="HisRS_anticodon"/>
</dbReference>
<dbReference type="NCBIfam" id="TIGR00442">
    <property type="entry name" value="hisS"/>
    <property type="match status" value="1"/>
</dbReference>
<dbReference type="PANTHER" id="PTHR11476:SF7">
    <property type="entry name" value="HISTIDINE--TRNA LIGASE"/>
    <property type="match status" value="1"/>
</dbReference>
<dbReference type="PANTHER" id="PTHR11476">
    <property type="entry name" value="HISTIDYL-TRNA SYNTHETASE"/>
    <property type="match status" value="1"/>
</dbReference>
<dbReference type="Pfam" id="PF03129">
    <property type="entry name" value="HGTP_anticodon"/>
    <property type="match status" value="1"/>
</dbReference>
<dbReference type="Pfam" id="PF13393">
    <property type="entry name" value="tRNA-synt_His"/>
    <property type="match status" value="1"/>
</dbReference>
<dbReference type="PIRSF" id="PIRSF001549">
    <property type="entry name" value="His-tRNA_synth"/>
    <property type="match status" value="1"/>
</dbReference>
<dbReference type="SUPFAM" id="SSF52954">
    <property type="entry name" value="Class II aaRS ABD-related"/>
    <property type="match status" value="1"/>
</dbReference>
<dbReference type="SUPFAM" id="SSF55681">
    <property type="entry name" value="Class II aaRS and biotin synthetases"/>
    <property type="match status" value="1"/>
</dbReference>
<dbReference type="PROSITE" id="PS50862">
    <property type="entry name" value="AA_TRNA_LIGASE_II"/>
    <property type="match status" value="1"/>
</dbReference>
<accession>Q8P9P5</accession>
<gene>
    <name type="primary">hisS</name>
    <name type="ordered locus">XCC1806</name>
</gene>
<keyword id="KW-0030">Aminoacyl-tRNA synthetase</keyword>
<keyword id="KW-0067">ATP-binding</keyword>
<keyword id="KW-0963">Cytoplasm</keyword>
<keyword id="KW-0436">Ligase</keyword>
<keyword id="KW-0547">Nucleotide-binding</keyword>
<keyword id="KW-0648">Protein biosynthesis</keyword>
<keyword id="KW-1185">Reference proteome</keyword>